<reference key="1">
    <citation type="journal article" date="1997" name="Nature">
        <title>The complete genome sequence of the hyperthermophilic, sulphate-reducing archaeon Archaeoglobus fulgidus.</title>
        <authorList>
            <person name="Klenk H.-P."/>
            <person name="Clayton R.A."/>
            <person name="Tomb J.-F."/>
            <person name="White O."/>
            <person name="Nelson K.E."/>
            <person name="Ketchum K.A."/>
            <person name="Dodson R.J."/>
            <person name="Gwinn M.L."/>
            <person name="Hickey E.K."/>
            <person name="Peterson J.D."/>
            <person name="Richardson D.L."/>
            <person name="Kerlavage A.R."/>
            <person name="Graham D.E."/>
            <person name="Kyrpides N.C."/>
            <person name="Fleischmann R.D."/>
            <person name="Quackenbush J."/>
            <person name="Lee N.H."/>
            <person name="Sutton G.G."/>
            <person name="Gill S.R."/>
            <person name="Kirkness E.F."/>
            <person name="Dougherty B.A."/>
            <person name="McKenney K."/>
            <person name="Adams M.D."/>
            <person name="Loftus B.J."/>
            <person name="Peterson S.N."/>
            <person name="Reich C.I."/>
            <person name="McNeil L.K."/>
            <person name="Badger J.H."/>
            <person name="Glodek A."/>
            <person name="Zhou L."/>
            <person name="Overbeek R."/>
            <person name="Gocayne J.D."/>
            <person name="Weidman J.F."/>
            <person name="McDonald L.A."/>
            <person name="Utterback T.R."/>
            <person name="Cotton M.D."/>
            <person name="Spriggs T."/>
            <person name="Artiach P."/>
            <person name="Kaine B.P."/>
            <person name="Sykes S.M."/>
            <person name="Sadow P.W."/>
            <person name="D'Andrea K.P."/>
            <person name="Bowman C."/>
            <person name="Fujii C."/>
            <person name="Garland S.A."/>
            <person name="Mason T.M."/>
            <person name="Olsen G.J."/>
            <person name="Fraser C.M."/>
            <person name="Smith H.O."/>
            <person name="Woese C.R."/>
            <person name="Venter J.C."/>
        </authorList>
    </citation>
    <scope>NUCLEOTIDE SEQUENCE [LARGE SCALE GENOMIC DNA]</scope>
    <source>
        <strain>ATCC 49558 / DSM 4304 / JCM 9628 / NBRC 100126 / VC-16</strain>
    </source>
</reference>
<feature type="chain" id="PRO_0000154788" description="Large ribosomal subunit protein uL10">
    <location>
        <begin position="1"/>
        <end position="339"/>
    </location>
</feature>
<feature type="region of interest" description="Disordered" evidence="2">
    <location>
        <begin position="300"/>
        <end position="339"/>
    </location>
</feature>
<feature type="compositionally biased region" description="Acidic residues" evidence="2">
    <location>
        <begin position="310"/>
        <end position="331"/>
    </location>
</feature>
<organism>
    <name type="scientific">Archaeoglobus fulgidus (strain ATCC 49558 / DSM 4304 / JCM 9628 / NBRC 100126 / VC-16)</name>
    <dbReference type="NCBI Taxonomy" id="224325"/>
    <lineage>
        <taxon>Archaea</taxon>
        <taxon>Methanobacteriati</taxon>
        <taxon>Methanobacteriota</taxon>
        <taxon>Archaeoglobi</taxon>
        <taxon>Archaeoglobales</taxon>
        <taxon>Archaeoglobaceae</taxon>
        <taxon>Archaeoglobus</taxon>
    </lineage>
</organism>
<comment type="function">
    <text evidence="1">Forms part of the ribosomal stalk, playing a central role in the interaction of the ribosome with GTP-bound translation factors.</text>
</comment>
<comment type="subunit">
    <text evidence="1">Part of the 50S ribosomal subunit. Forms part of the ribosomal stalk which helps the ribosome interact with GTP-bound translation factors. Forms a heptameric L10(L12)2(L12)2(L12)2 complex, where L10 forms an elongated spine to which the L12 dimers bind in a sequential fashion.</text>
</comment>
<comment type="similarity">
    <text evidence="1">Belongs to the universal ribosomal protein uL10 family.</text>
</comment>
<gene>
    <name evidence="1" type="primary">rpl10</name>
    <name evidence="1" type="synonym">rplP0</name>
    <name type="ordered locus">AF_1491</name>
</gene>
<evidence type="ECO:0000255" key="1">
    <source>
        <dbReference type="HAMAP-Rule" id="MF_00280"/>
    </source>
</evidence>
<evidence type="ECO:0000256" key="2">
    <source>
        <dbReference type="SAM" id="MobiDB-lite"/>
    </source>
</evidence>
<evidence type="ECO:0000305" key="3"/>
<sequence length="339" mass="37096">MAAVRGSPPEYKVRAVEEIKRMISSKPVVAIVSFRNVPAGQMQKIRREFRGKAEIKVVKNTLLERALDALGGDYLKLKDYLGDQIAIITADENPFRLFRMIEDTKVPSPLKPNQVSPVDVVVNEGPTPIPPGPLMAELQMAGLPVAIEKGKVVVKATTTVVKAGEVVRPEVARALERLDIKPIKIGLDVKAMLDSGVILTPETLAIDTEKVLEDFQRAYQMALNLAVNSAYVTEETAEILIMKAVMDARNLAINAGIFEKGVMEDILMKAHAEMLSLASLLPDEALDEELKSMLSGIAEAAAQATPSVEEREEEEKPEEEEEEEEKEEEAIEGLGALFG</sequence>
<dbReference type="EMBL" id="AE000782">
    <property type="protein sequence ID" value="AAB89749.1"/>
    <property type="molecule type" value="Genomic_DNA"/>
</dbReference>
<dbReference type="PIR" id="B69436">
    <property type="entry name" value="B69436"/>
</dbReference>
<dbReference type="RefSeq" id="WP_010878988.1">
    <property type="nucleotide sequence ID" value="NC_000917.1"/>
</dbReference>
<dbReference type="SMR" id="O28781"/>
<dbReference type="STRING" id="224325.AF_1491"/>
<dbReference type="PaxDb" id="224325-AF_1491"/>
<dbReference type="EnsemblBacteria" id="AAB89749">
    <property type="protein sequence ID" value="AAB89749"/>
    <property type="gene ID" value="AF_1491"/>
</dbReference>
<dbReference type="KEGG" id="afu:AF_1491"/>
<dbReference type="eggNOG" id="arCOG04288">
    <property type="taxonomic scope" value="Archaea"/>
</dbReference>
<dbReference type="HOGENOM" id="CLU_053173_0_0_2"/>
<dbReference type="OrthoDB" id="30930at2157"/>
<dbReference type="PhylomeDB" id="O28781"/>
<dbReference type="Proteomes" id="UP000002199">
    <property type="component" value="Chromosome"/>
</dbReference>
<dbReference type="GO" id="GO:0022625">
    <property type="term" value="C:cytosolic large ribosomal subunit"/>
    <property type="evidence" value="ECO:0007669"/>
    <property type="project" value="TreeGrafter"/>
</dbReference>
<dbReference type="GO" id="GO:0070180">
    <property type="term" value="F:large ribosomal subunit rRNA binding"/>
    <property type="evidence" value="ECO:0007669"/>
    <property type="project" value="UniProtKB-UniRule"/>
</dbReference>
<dbReference type="GO" id="GO:0003735">
    <property type="term" value="F:structural constituent of ribosome"/>
    <property type="evidence" value="ECO:0007669"/>
    <property type="project" value="TreeGrafter"/>
</dbReference>
<dbReference type="GO" id="GO:0002181">
    <property type="term" value="P:cytoplasmic translation"/>
    <property type="evidence" value="ECO:0007669"/>
    <property type="project" value="TreeGrafter"/>
</dbReference>
<dbReference type="GO" id="GO:0000027">
    <property type="term" value="P:ribosomal large subunit assembly"/>
    <property type="evidence" value="ECO:0007669"/>
    <property type="project" value="TreeGrafter"/>
</dbReference>
<dbReference type="CDD" id="cd05795">
    <property type="entry name" value="Ribosomal_P0_L10e"/>
    <property type="match status" value="1"/>
</dbReference>
<dbReference type="Gene3D" id="3.30.70.1730">
    <property type="match status" value="1"/>
</dbReference>
<dbReference type="Gene3D" id="3.90.105.20">
    <property type="match status" value="1"/>
</dbReference>
<dbReference type="Gene3D" id="6.10.140.760">
    <property type="match status" value="1"/>
</dbReference>
<dbReference type="HAMAP" id="MF_00280">
    <property type="entry name" value="Ribosomal_uL10_arch"/>
    <property type="match status" value="1"/>
</dbReference>
<dbReference type="InterPro" id="IPR050323">
    <property type="entry name" value="Ribosomal_protein_uL10"/>
</dbReference>
<dbReference type="InterPro" id="IPR001790">
    <property type="entry name" value="Ribosomal_uL10"/>
</dbReference>
<dbReference type="InterPro" id="IPR040637">
    <property type="entry name" value="Ribosomal_uL10-like_insert"/>
</dbReference>
<dbReference type="InterPro" id="IPR043164">
    <property type="entry name" value="Ribosomal_uL10-like_insert_sf"/>
</dbReference>
<dbReference type="InterPro" id="IPR043141">
    <property type="entry name" value="Ribosomal_uL10-like_sf"/>
</dbReference>
<dbReference type="InterPro" id="IPR022909">
    <property type="entry name" value="Ribosomal_uL10_arc"/>
</dbReference>
<dbReference type="NCBIfam" id="NF003098">
    <property type="entry name" value="PRK04019.1-5"/>
    <property type="match status" value="1"/>
</dbReference>
<dbReference type="PANTHER" id="PTHR45699">
    <property type="entry name" value="60S ACIDIC RIBOSOMAL PROTEIN P0"/>
    <property type="match status" value="1"/>
</dbReference>
<dbReference type="PANTHER" id="PTHR45699:SF3">
    <property type="entry name" value="LARGE RIBOSOMAL SUBUNIT PROTEIN UL10"/>
    <property type="match status" value="1"/>
</dbReference>
<dbReference type="Pfam" id="PF00466">
    <property type="entry name" value="Ribosomal_L10"/>
    <property type="match status" value="1"/>
</dbReference>
<dbReference type="Pfam" id="PF17777">
    <property type="entry name" value="RL10P_insert"/>
    <property type="match status" value="1"/>
</dbReference>
<dbReference type="SUPFAM" id="SSF160369">
    <property type="entry name" value="Ribosomal protein L10-like"/>
    <property type="match status" value="1"/>
</dbReference>
<protein>
    <recommendedName>
        <fullName evidence="1">Large ribosomal subunit protein uL10</fullName>
    </recommendedName>
    <alternativeName>
        <fullName evidence="3">50S ribosomal protein L10</fullName>
    </alternativeName>
    <alternativeName>
        <fullName evidence="1">Acidic ribosomal protein P0 homolog</fullName>
    </alternativeName>
</protein>
<proteinExistence type="inferred from homology"/>
<accession>O28781</accession>
<keyword id="KW-1185">Reference proteome</keyword>
<keyword id="KW-0687">Ribonucleoprotein</keyword>
<keyword id="KW-0689">Ribosomal protein</keyword>
<keyword id="KW-0694">RNA-binding</keyword>
<keyword id="KW-0699">rRNA-binding</keyword>
<name>RL10_ARCFU</name>